<organism>
    <name type="scientific">Mus musculus</name>
    <name type="common">Mouse</name>
    <dbReference type="NCBI Taxonomy" id="10090"/>
    <lineage>
        <taxon>Eukaryota</taxon>
        <taxon>Metazoa</taxon>
        <taxon>Chordata</taxon>
        <taxon>Craniata</taxon>
        <taxon>Vertebrata</taxon>
        <taxon>Euteleostomi</taxon>
        <taxon>Mammalia</taxon>
        <taxon>Eutheria</taxon>
        <taxon>Euarchontoglires</taxon>
        <taxon>Glires</taxon>
        <taxon>Rodentia</taxon>
        <taxon>Myomorpha</taxon>
        <taxon>Muroidea</taxon>
        <taxon>Muridae</taxon>
        <taxon>Murinae</taxon>
        <taxon>Mus</taxon>
        <taxon>Mus</taxon>
    </lineage>
</organism>
<reference key="1">
    <citation type="journal article" date="1992" name="Proc. Natl. Acad. Sci. U.S.A.">
        <title>itk, a T-cell-specific tyrosine kinase gene inducible by interleukin 2.</title>
        <authorList>
            <person name="Siliciano J.D."/>
            <person name="Morrow T.A."/>
            <person name="Desiderio S.V."/>
        </authorList>
    </citation>
    <scope>NUCLEOTIDE SEQUENCE [MRNA]</scope>
    <source>
        <tissue>Thymocyte</tissue>
    </source>
</reference>
<reference key="2">
    <citation type="journal article" date="1993" name="Proc. Natl. Acad. Sci. U.S.A.">
        <title>Developmental regulation of a murine T-cell-specific tyrosine kinase gene, Tsk.</title>
        <authorList>
            <person name="Heyeck S.D."/>
            <person name="Berg L.J."/>
        </authorList>
    </citation>
    <scope>NUCLEOTIDE SEQUENCE [MRNA]</scope>
    <source>
        <tissue>Thymocyte</tissue>
    </source>
</reference>
<reference key="3">
    <citation type="journal article" date="1993" name="Biochem. Biophys. Res. Commun.">
        <title>Structure and expression of novel protein-tyrosine kinases, Emb and Emt, in hematopoietic cells.</title>
        <authorList>
            <person name="Yamada N."/>
            <person name="Kawakami Y."/>
            <person name="Kimura H."/>
            <person name="Fukamachi H."/>
            <person name="Baier G."/>
            <person name="Altman A."/>
            <person name="Kato T."/>
            <person name="Inagaki Y."/>
            <person name="Kawakami T."/>
        </authorList>
    </citation>
    <scope>NUCLEOTIDE SEQUENCE [MRNA]</scope>
    <source>
        <strain>CBA/J</strain>
        <tissue>Mast cell</tissue>
    </source>
</reference>
<reference key="4">
    <citation type="submission" date="1993-01" db="EMBL/GenBank/DDBJ databases">
        <authorList>
            <person name="Ogata M."/>
            <person name="Sawada M."/>
            <person name="Fujiwara H."/>
            <person name="Hamaoka T."/>
        </authorList>
    </citation>
    <scope>NUCLEOTIDE SEQUENCE [MRNA]</scope>
</reference>
<reference key="5">
    <citation type="journal article" date="1995" name="Immunity">
        <title>Altered T cell receptor signaling and disrupted T cell development in mice lacking Itk.</title>
        <authorList>
            <person name="Liao X.C."/>
            <person name="Littman D.R."/>
        </authorList>
    </citation>
    <scope>DISRUPTION PHENOTYPE</scope>
</reference>
<reference key="6">
    <citation type="journal article" date="2005" name="Science">
        <title>T helper cell fate specified by kinase-mediated interaction of T-bet with GATA-3.</title>
        <authorList>
            <person name="Hwang E.S."/>
            <person name="Szabo S.J."/>
            <person name="Schwartzberg P.L."/>
            <person name="Glimcher L.H."/>
        </authorList>
    </citation>
    <scope>FUNCTION</scope>
    <scope>INTERACTION WITH TBX21</scope>
    <scope>SUBCELLULAR LOCATION</scope>
</reference>
<reference key="7">
    <citation type="journal article" date="2009" name="Nat. Immunol.">
        <title>Themis controls thymocyte selection through regulation of T cell antigen receptor-mediated signaling.</title>
        <authorList>
            <person name="Fu G."/>
            <person name="Vallee S."/>
            <person name="Rybakin V."/>
            <person name="McGuire M.V."/>
            <person name="Ampudia J."/>
            <person name="Brockmeyer C."/>
            <person name="Salek M."/>
            <person name="Fallen P.R."/>
            <person name="Hoerter J.A.H."/>
            <person name="Munshi A."/>
            <person name="Huang Y.H."/>
            <person name="Hu J."/>
            <person name="Fox H.S."/>
            <person name="Sauer K."/>
            <person name="Acuto O."/>
            <person name="Gascoigne N.R.J."/>
        </authorList>
    </citation>
    <scope>INTERACTION WITH THEMIS</scope>
</reference>
<reference key="8">
    <citation type="journal article" date="1997" name="Nature">
        <title>Regulatory intramolecular association in a tyrosine kinase of the Tec family.</title>
        <authorList>
            <person name="Andreotti A.H."/>
            <person name="Bunnell S.C."/>
            <person name="Feng S."/>
            <person name="Berg L.J."/>
            <person name="Schreiber S.L."/>
        </authorList>
    </citation>
    <scope>STRUCTURE BY NMR OF 160-236</scope>
</reference>
<reference key="9">
    <citation type="journal article" date="1994" name="Proc. Natl. Acad. Sci. U.S.A.">
        <title>CD28 is associated with and induces the immediate tyrosine phosphorylation and activation of the Tec family kinase ITK/EMT in the human Jurkat leukemic T-cell line.</title>
        <authorList>
            <person name="August A."/>
            <person name="Gibson S."/>
            <person name="Kawakami Y."/>
            <person name="Kawakami T."/>
            <person name="Mills G.B."/>
            <person name="Dupont B."/>
        </authorList>
    </citation>
    <scope>CHARACTERIZATION</scope>
</reference>
<reference key="10">
    <citation type="journal article" date="1996" name="Int. Immunol.">
        <title>CD2 signaling in T cells involves tyrosine phosphorylation and activation of the Tec family kinase, EMT/ITK/TSK.</title>
        <authorList>
            <person name="King P.D."/>
            <person name="Sadra A."/>
            <person name="Han A."/>
            <person name="Liu X.-R."/>
            <person name="Sunder-Plassmann R."/>
            <person name="Reinherz E.L."/>
            <person name="Dupont B."/>
        </authorList>
    </citation>
    <scope>CHARACTERIZATION</scope>
</reference>
<reference key="11">
    <citation type="journal article" date="1999" name="J. Immunol.">
        <title>Emt/Itk associates with activated TCR complexes: role of the pleckstrin homology domain.</title>
        <authorList>
            <person name="Ching K.A."/>
            <person name="Kawakami Y."/>
            <person name="Kawakami T."/>
            <person name="Tsoukas C.D."/>
        </authorList>
    </citation>
    <scope>CHARACTERIZATION</scope>
</reference>
<reference key="12">
    <citation type="journal article" date="1999" name="Science">
        <title>Requirement for Tec kinases Rlk and Itk in T cell receptor signaling and immunity.</title>
        <authorList>
            <person name="Schaeffer E.M."/>
            <person name="Debnath J."/>
            <person name="Yap G."/>
            <person name="McVicar D."/>
            <person name="Liao X.C."/>
            <person name="Littman D.R."/>
            <person name="Sher A."/>
            <person name="Varmus H.E."/>
            <person name="Lenardo M.J."/>
            <person name="Schwartzberg P.L."/>
        </authorList>
    </citation>
    <scope>DISRUPTION PHENOTYPE</scope>
</reference>
<reference key="13">
    <citation type="journal article" date="2006" name="Immunity">
        <title>Altered development of CD8+ T cell lineages in mice deficient for the Tec kinases Itk and Rlk.</title>
        <authorList>
            <person name="Broussard C."/>
            <person name="Fleischacker C."/>
            <person name="Horai R."/>
            <person name="Chetana M."/>
            <person name="Venegas A.M."/>
            <person name="Sharp L.L."/>
            <person name="Hedrick S.M."/>
            <person name="Fowlkes B.J."/>
            <person name="Schwartzberg P.L."/>
        </authorList>
    </citation>
    <scope>DISRUPTION PHENOTYPE</scope>
</reference>
<reference key="14">
    <citation type="journal article" date="2010" name="J. Immunol.">
        <title>Disrupting the intermolecular self-association of Itk enhances T cell signaling.</title>
        <authorList>
            <person name="Min L."/>
            <person name="Wu W."/>
            <person name="Joseph R.E."/>
            <person name="Fulton D.B."/>
            <person name="Berg L."/>
            <person name="Andreotti A.H."/>
        </authorList>
    </citation>
    <scope>SUBUNIT</scope>
</reference>
<reference key="15">
    <citation type="journal article" date="2011" name="J. Biol. Chem.">
        <title>Interleukin-2-inducible T cell kinase (Itk) network edge dependence for the maturation of iNKT cell.</title>
        <authorList>
            <person name="Qi Q."/>
            <person name="Xia M."/>
            <person name="Bai Y."/>
            <person name="Yu S."/>
            <person name="Cantorna M."/>
            <person name="August A."/>
        </authorList>
    </citation>
    <scope>FUNCTION IN INVARIANT NKT CELL MATURATION</scope>
    <scope>DISRUPTION PHENOTYPE</scope>
</reference>
<reference key="16">
    <citation type="journal article" date="2013" name="Immunity">
        <title>A network of high-mobility group box transcription factors programs innate interleukin-17 production.</title>
        <authorList>
            <consortium name="Immunological Genome Project Consortium"/>
            <person name="Malhotra N."/>
            <person name="Narayan K."/>
            <person name="Cho O.H."/>
            <person name="Sylvia K.E."/>
            <person name="Yin C."/>
            <person name="Melichar H."/>
            <person name="Rashighi M."/>
            <person name="Lefebvre V."/>
            <person name="Harris J.E."/>
            <person name="Berg L.J."/>
            <person name="Kang J."/>
        </authorList>
    </citation>
    <scope>FUNCTION</scope>
    <scope>DISRUPTION PHENOTYPE</scope>
</reference>
<dbReference type="EC" id="2.7.10.2"/>
<dbReference type="EMBL" id="L00619">
    <property type="protein sequence ID" value="AAA39337.1"/>
    <property type="molecule type" value="mRNA"/>
</dbReference>
<dbReference type="EMBL" id="L05631">
    <property type="protein sequence ID" value="AAA40518.1"/>
    <property type="molecule type" value="mRNA"/>
</dbReference>
<dbReference type="EMBL" id="L10628">
    <property type="status" value="NOT_ANNOTATED_CDS"/>
    <property type="molecule type" value="mRNA"/>
</dbReference>
<dbReference type="EMBL" id="D14042">
    <property type="protein sequence ID" value="BAA03129.1"/>
    <property type="molecule type" value="mRNA"/>
</dbReference>
<dbReference type="CCDS" id="CCDS70169.1"/>
<dbReference type="PIR" id="A43030">
    <property type="entry name" value="A43030"/>
</dbReference>
<dbReference type="RefSeq" id="NP_001268894.1">
    <property type="nucleotide sequence ID" value="NM_001281965.1"/>
</dbReference>
<dbReference type="RefSeq" id="NP_001268895.1">
    <property type="nucleotide sequence ID" value="NM_001281966.1"/>
</dbReference>
<dbReference type="RefSeq" id="NP_001268897.1">
    <property type="nucleotide sequence ID" value="NM_001281968.1"/>
</dbReference>
<dbReference type="RefSeq" id="NP_034713.2">
    <property type="nucleotide sequence ID" value="NM_010583.3"/>
</dbReference>
<dbReference type="PDB" id="1AWJ">
    <property type="method" value="NMR"/>
    <property type="chains" value="A=160-236"/>
</dbReference>
<dbReference type="PDB" id="1LUI">
    <property type="method" value="NMR"/>
    <property type="chains" value="A=238-344"/>
</dbReference>
<dbReference type="PDB" id="1LUK">
    <property type="method" value="NMR"/>
    <property type="chains" value="A=238-344"/>
</dbReference>
<dbReference type="PDB" id="1LUM">
    <property type="method" value="NMR"/>
    <property type="chains" value="A=238-344"/>
</dbReference>
<dbReference type="PDB" id="1LUN">
    <property type="method" value="NMR"/>
    <property type="chains" value="A=238-344"/>
</dbReference>
<dbReference type="PDB" id="2ETZ">
    <property type="method" value="NMR"/>
    <property type="chains" value="A=238-344"/>
</dbReference>
<dbReference type="PDB" id="2EU0">
    <property type="method" value="NMR"/>
    <property type="chains" value="A=238-344"/>
</dbReference>
<dbReference type="PDB" id="2K79">
    <property type="method" value="NMR"/>
    <property type="chains" value="A=177-237, B=238-344"/>
</dbReference>
<dbReference type="PDB" id="2K7A">
    <property type="method" value="NMR"/>
    <property type="chains" value="A=177-237, B=238-344"/>
</dbReference>
<dbReference type="PDB" id="2RN8">
    <property type="method" value="NMR"/>
    <property type="chains" value="A=177-238"/>
</dbReference>
<dbReference type="PDB" id="2RNA">
    <property type="method" value="NMR"/>
    <property type="chains" value="A=177-238"/>
</dbReference>
<dbReference type="PDB" id="3S9K">
    <property type="method" value="X-ray"/>
    <property type="resolution" value="2.35 A"/>
    <property type="chains" value="A=236-344"/>
</dbReference>
<dbReference type="PDBsum" id="1AWJ"/>
<dbReference type="PDBsum" id="1LUI"/>
<dbReference type="PDBsum" id="1LUK"/>
<dbReference type="PDBsum" id="1LUM"/>
<dbReference type="PDBsum" id="1LUN"/>
<dbReference type="PDBsum" id="2ETZ"/>
<dbReference type="PDBsum" id="2EU0"/>
<dbReference type="PDBsum" id="2K79"/>
<dbReference type="PDBsum" id="2K7A"/>
<dbReference type="PDBsum" id="2RN8"/>
<dbReference type="PDBsum" id="2RNA"/>
<dbReference type="PDBsum" id="3S9K"/>
<dbReference type="BMRB" id="Q03526"/>
<dbReference type="SMR" id="Q03526"/>
<dbReference type="BioGRID" id="200840">
    <property type="interactions" value="5"/>
</dbReference>
<dbReference type="DIP" id="DIP-29283N"/>
<dbReference type="FunCoup" id="Q03526">
    <property type="interactions" value="971"/>
</dbReference>
<dbReference type="IntAct" id="Q03526">
    <property type="interactions" value="9"/>
</dbReference>
<dbReference type="MINT" id="Q03526"/>
<dbReference type="STRING" id="10090.ENSMUSP00000104860"/>
<dbReference type="GlyGen" id="Q03526">
    <property type="glycosylation" value="1 site"/>
</dbReference>
<dbReference type="iPTMnet" id="Q03526"/>
<dbReference type="PhosphoSitePlus" id="Q03526"/>
<dbReference type="PaxDb" id="10090-ENSMUSP00000104860"/>
<dbReference type="ProteomicsDB" id="269110"/>
<dbReference type="Antibodypedia" id="16533">
    <property type="antibodies" value="523 antibodies from 41 providers"/>
</dbReference>
<dbReference type="DNASU" id="16428"/>
<dbReference type="Ensembl" id="ENSMUST00000109237.9">
    <property type="protein sequence ID" value="ENSMUSP00000104860.3"/>
    <property type="gene ID" value="ENSMUSG00000020395.14"/>
</dbReference>
<dbReference type="GeneID" id="16428"/>
<dbReference type="KEGG" id="mmu:16428"/>
<dbReference type="UCSC" id="uc011xtn.2">
    <property type="organism name" value="mouse"/>
</dbReference>
<dbReference type="AGR" id="MGI:96621"/>
<dbReference type="CTD" id="3702"/>
<dbReference type="MGI" id="MGI:96621">
    <property type="gene designation" value="Itk"/>
</dbReference>
<dbReference type="VEuPathDB" id="HostDB:ENSMUSG00000020395"/>
<dbReference type="eggNOG" id="KOG0197">
    <property type="taxonomic scope" value="Eukaryota"/>
</dbReference>
<dbReference type="GeneTree" id="ENSGT00940000158850"/>
<dbReference type="InParanoid" id="Q03526"/>
<dbReference type="OrthoDB" id="4062651at2759"/>
<dbReference type="PhylomeDB" id="Q03526"/>
<dbReference type="TreeFam" id="TF351634"/>
<dbReference type="BRENDA" id="2.7.10.1">
    <property type="organism ID" value="3474"/>
</dbReference>
<dbReference type="BRENDA" id="2.7.10.2">
    <property type="organism ID" value="3474"/>
</dbReference>
<dbReference type="Reactome" id="R-MMU-202433">
    <property type="pathway name" value="Generation of second messenger molecules"/>
</dbReference>
<dbReference type="Reactome" id="R-MMU-2871809">
    <property type="pathway name" value="FCERI mediated Ca+2 mobilization"/>
</dbReference>
<dbReference type="BioGRID-ORCS" id="16428">
    <property type="hits" value="1 hit in 78 CRISPR screens"/>
</dbReference>
<dbReference type="ChiTaRS" id="Itk">
    <property type="organism name" value="mouse"/>
</dbReference>
<dbReference type="EvolutionaryTrace" id="Q03526"/>
<dbReference type="PRO" id="PR:Q03526"/>
<dbReference type="Proteomes" id="UP000000589">
    <property type="component" value="Chromosome 11"/>
</dbReference>
<dbReference type="RNAct" id="Q03526">
    <property type="molecule type" value="protein"/>
</dbReference>
<dbReference type="Bgee" id="ENSMUSG00000020395">
    <property type="expression patterns" value="Expressed in thymus and 62 other cell types or tissues"/>
</dbReference>
<dbReference type="ExpressionAtlas" id="Q03526">
    <property type="expression patterns" value="baseline and differential"/>
</dbReference>
<dbReference type="GO" id="GO:0005911">
    <property type="term" value="C:cell-cell junction"/>
    <property type="evidence" value="ECO:0000314"/>
    <property type="project" value="MGI"/>
</dbReference>
<dbReference type="GO" id="GO:0005829">
    <property type="term" value="C:cytosol"/>
    <property type="evidence" value="ECO:0000304"/>
    <property type="project" value="Reactome"/>
</dbReference>
<dbReference type="GO" id="GO:0005634">
    <property type="term" value="C:nucleus"/>
    <property type="evidence" value="ECO:0000314"/>
    <property type="project" value="UniProtKB"/>
</dbReference>
<dbReference type="GO" id="GO:0005524">
    <property type="term" value="F:ATP binding"/>
    <property type="evidence" value="ECO:0007669"/>
    <property type="project" value="UniProtKB-KW"/>
</dbReference>
<dbReference type="GO" id="GO:0004715">
    <property type="term" value="F:non-membrane spanning protein tyrosine kinase activity"/>
    <property type="evidence" value="ECO:0000250"/>
    <property type="project" value="UniProtKB"/>
</dbReference>
<dbReference type="GO" id="GO:0008270">
    <property type="term" value="F:zinc ion binding"/>
    <property type="evidence" value="ECO:0007669"/>
    <property type="project" value="UniProtKB-KW"/>
</dbReference>
<dbReference type="GO" id="GO:0002250">
    <property type="term" value="P:adaptive immune response"/>
    <property type="evidence" value="ECO:0000315"/>
    <property type="project" value="UniProtKB"/>
</dbReference>
<dbReference type="GO" id="GO:0046629">
    <property type="term" value="P:gamma-delta T cell activation"/>
    <property type="evidence" value="ECO:0000315"/>
    <property type="project" value="UniProtKB"/>
</dbReference>
<dbReference type="GO" id="GO:0035556">
    <property type="term" value="P:intracellular signal transduction"/>
    <property type="evidence" value="ECO:0007669"/>
    <property type="project" value="InterPro"/>
</dbReference>
<dbReference type="GO" id="GO:0001865">
    <property type="term" value="P:NK T cell differentiation"/>
    <property type="evidence" value="ECO:0000315"/>
    <property type="project" value="MGI"/>
</dbReference>
<dbReference type="GO" id="GO:0001819">
    <property type="term" value="P:positive regulation of cytokine production"/>
    <property type="evidence" value="ECO:0000315"/>
    <property type="project" value="UniProtKB"/>
</dbReference>
<dbReference type="GO" id="GO:0006468">
    <property type="term" value="P:protein phosphorylation"/>
    <property type="evidence" value="ECO:0000315"/>
    <property type="project" value="UniProtKB"/>
</dbReference>
<dbReference type="GO" id="GO:0050852">
    <property type="term" value="P:T cell receptor signaling pathway"/>
    <property type="evidence" value="ECO:0000315"/>
    <property type="project" value="UniProtKB"/>
</dbReference>
<dbReference type="CDD" id="cd01238">
    <property type="entry name" value="PH_Btk"/>
    <property type="match status" value="1"/>
</dbReference>
<dbReference type="CDD" id="cd05112">
    <property type="entry name" value="PTKc_Itk"/>
    <property type="match status" value="1"/>
</dbReference>
<dbReference type="CDD" id="cd10396">
    <property type="entry name" value="SH2_Tec_Itk"/>
    <property type="match status" value="1"/>
</dbReference>
<dbReference type="CDD" id="cd11908">
    <property type="entry name" value="SH3_ITK"/>
    <property type="match status" value="1"/>
</dbReference>
<dbReference type="FunFam" id="1.10.510.10:FF:000052">
    <property type="entry name" value="Tyrosine-protein kinase"/>
    <property type="match status" value="1"/>
</dbReference>
<dbReference type="FunFam" id="2.30.29.30:FF:000244">
    <property type="entry name" value="Tyrosine-protein kinase"/>
    <property type="match status" value="1"/>
</dbReference>
<dbReference type="FunFam" id="2.30.30.40:FF:000176">
    <property type="entry name" value="Tyrosine-protein kinase"/>
    <property type="match status" value="1"/>
</dbReference>
<dbReference type="FunFam" id="3.30.200.20:FF:000053">
    <property type="entry name" value="Tyrosine-protein kinase"/>
    <property type="match status" value="1"/>
</dbReference>
<dbReference type="FunFam" id="3.30.505.10:FF:000061">
    <property type="entry name" value="Tyrosine-protein kinase"/>
    <property type="match status" value="1"/>
</dbReference>
<dbReference type="Gene3D" id="2.30.29.30">
    <property type="entry name" value="Pleckstrin-homology domain (PH domain)/Phosphotyrosine-binding domain (PTB)"/>
    <property type="match status" value="1"/>
</dbReference>
<dbReference type="Gene3D" id="3.30.505.10">
    <property type="entry name" value="SH2 domain"/>
    <property type="match status" value="1"/>
</dbReference>
<dbReference type="Gene3D" id="2.30.30.40">
    <property type="entry name" value="SH3 Domains"/>
    <property type="match status" value="1"/>
</dbReference>
<dbReference type="Gene3D" id="1.10.510.10">
    <property type="entry name" value="Transferase(Phosphotransferase) domain 1"/>
    <property type="match status" value="1"/>
</dbReference>
<dbReference type="IDEAL" id="IID50118"/>
<dbReference type="InterPro" id="IPR042785">
    <property type="entry name" value="ITK_PTKc"/>
</dbReference>
<dbReference type="InterPro" id="IPR035583">
    <property type="entry name" value="ITK_SH3"/>
</dbReference>
<dbReference type="InterPro" id="IPR011009">
    <property type="entry name" value="Kinase-like_dom_sf"/>
</dbReference>
<dbReference type="InterPro" id="IPR050198">
    <property type="entry name" value="Non-receptor_tyrosine_kinases"/>
</dbReference>
<dbReference type="InterPro" id="IPR011993">
    <property type="entry name" value="PH-like_dom_sf"/>
</dbReference>
<dbReference type="InterPro" id="IPR001849">
    <property type="entry name" value="PH_domain"/>
</dbReference>
<dbReference type="InterPro" id="IPR000719">
    <property type="entry name" value="Prot_kinase_dom"/>
</dbReference>
<dbReference type="InterPro" id="IPR017441">
    <property type="entry name" value="Protein_kinase_ATP_BS"/>
</dbReference>
<dbReference type="InterPro" id="IPR001245">
    <property type="entry name" value="Ser-Thr/Tyr_kinase_cat_dom"/>
</dbReference>
<dbReference type="InterPro" id="IPR000980">
    <property type="entry name" value="SH2"/>
</dbReference>
<dbReference type="InterPro" id="IPR036860">
    <property type="entry name" value="SH2_dom_sf"/>
</dbReference>
<dbReference type="InterPro" id="IPR036028">
    <property type="entry name" value="SH3-like_dom_sf"/>
</dbReference>
<dbReference type="InterPro" id="IPR001452">
    <property type="entry name" value="SH3_domain"/>
</dbReference>
<dbReference type="InterPro" id="IPR008266">
    <property type="entry name" value="Tyr_kinase_AS"/>
</dbReference>
<dbReference type="InterPro" id="IPR020635">
    <property type="entry name" value="Tyr_kinase_cat_dom"/>
</dbReference>
<dbReference type="InterPro" id="IPR001562">
    <property type="entry name" value="Znf_Btk_motif"/>
</dbReference>
<dbReference type="PANTHER" id="PTHR24418">
    <property type="entry name" value="TYROSINE-PROTEIN KINASE"/>
    <property type="match status" value="1"/>
</dbReference>
<dbReference type="Pfam" id="PF00779">
    <property type="entry name" value="BTK"/>
    <property type="match status" value="1"/>
</dbReference>
<dbReference type="Pfam" id="PF00169">
    <property type="entry name" value="PH"/>
    <property type="match status" value="1"/>
</dbReference>
<dbReference type="Pfam" id="PF07714">
    <property type="entry name" value="PK_Tyr_Ser-Thr"/>
    <property type="match status" value="1"/>
</dbReference>
<dbReference type="Pfam" id="PF00017">
    <property type="entry name" value="SH2"/>
    <property type="match status" value="1"/>
</dbReference>
<dbReference type="Pfam" id="PF00018">
    <property type="entry name" value="SH3_1"/>
    <property type="match status" value="1"/>
</dbReference>
<dbReference type="PRINTS" id="PR00401">
    <property type="entry name" value="SH2DOMAIN"/>
</dbReference>
<dbReference type="PRINTS" id="PR00402">
    <property type="entry name" value="TECBTKDOMAIN"/>
</dbReference>
<dbReference type="PRINTS" id="PR00109">
    <property type="entry name" value="TYRKINASE"/>
</dbReference>
<dbReference type="SMART" id="SM00107">
    <property type="entry name" value="BTK"/>
    <property type="match status" value="1"/>
</dbReference>
<dbReference type="SMART" id="SM00233">
    <property type="entry name" value="PH"/>
    <property type="match status" value="1"/>
</dbReference>
<dbReference type="SMART" id="SM00252">
    <property type="entry name" value="SH2"/>
    <property type="match status" value="1"/>
</dbReference>
<dbReference type="SMART" id="SM00326">
    <property type="entry name" value="SH3"/>
    <property type="match status" value="1"/>
</dbReference>
<dbReference type="SMART" id="SM00219">
    <property type="entry name" value="TyrKc"/>
    <property type="match status" value="1"/>
</dbReference>
<dbReference type="SUPFAM" id="SSF50729">
    <property type="entry name" value="PH domain-like"/>
    <property type="match status" value="1"/>
</dbReference>
<dbReference type="SUPFAM" id="SSF56112">
    <property type="entry name" value="Protein kinase-like (PK-like)"/>
    <property type="match status" value="1"/>
</dbReference>
<dbReference type="SUPFAM" id="SSF55550">
    <property type="entry name" value="SH2 domain"/>
    <property type="match status" value="1"/>
</dbReference>
<dbReference type="SUPFAM" id="SSF50044">
    <property type="entry name" value="SH3-domain"/>
    <property type="match status" value="1"/>
</dbReference>
<dbReference type="PROSITE" id="PS50003">
    <property type="entry name" value="PH_DOMAIN"/>
    <property type="match status" value="1"/>
</dbReference>
<dbReference type="PROSITE" id="PS00107">
    <property type="entry name" value="PROTEIN_KINASE_ATP"/>
    <property type="match status" value="1"/>
</dbReference>
<dbReference type="PROSITE" id="PS50011">
    <property type="entry name" value="PROTEIN_KINASE_DOM"/>
    <property type="match status" value="1"/>
</dbReference>
<dbReference type="PROSITE" id="PS00109">
    <property type="entry name" value="PROTEIN_KINASE_TYR"/>
    <property type="match status" value="1"/>
</dbReference>
<dbReference type="PROSITE" id="PS50001">
    <property type="entry name" value="SH2"/>
    <property type="match status" value="1"/>
</dbReference>
<dbReference type="PROSITE" id="PS50002">
    <property type="entry name" value="SH3"/>
    <property type="match status" value="1"/>
</dbReference>
<dbReference type="PROSITE" id="PS51113">
    <property type="entry name" value="ZF_BTK"/>
    <property type="match status" value="1"/>
</dbReference>
<evidence type="ECO:0000250" key="1"/>
<evidence type="ECO:0000250" key="2">
    <source>
        <dbReference type="UniProtKB" id="Q08881"/>
    </source>
</evidence>
<evidence type="ECO:0000255" key="3">
    <source>
        <dbReference type="PROSITE-ProRule" id="PRU00145"/>
    </source>
</evidence>
<evidence type="ECO:0000255" key="4">
    <source>
        <dbReference type="PROSITE-ProRule" id="PRU00159"/>
    </source>
</evidence>
<evidence type="ECO:0000255" key="5">
    <source>
        <dbReference type="PROSITE-ProRule" id="PRU00191"/>
    </source>
</evidence>
<evidence type="ECO:0000255" key="6">
    <source>
        <dbReference type="PROSITE-ProRule" id="PRU00192"/>
    </source>
</evidence>
<evidence type="ECO:0000255" key="7">
    <source>
        <dbReference type="PROSITE-ProRule" id="PRU00432"/>
    </source>
</evidence>
<evidence type="ECO:0000255" key="8">
    <source>
        <dbReference type="PROSITE-ProRule" id="PRU10028"/>
    </source>
</evidence>
<evidence type="ECO:0000256" key="9">
    <source>
        <dbReference type="SAM" id="MobiDB-lite"/>
    </source>
</evidence>
<evidence type="ECO:0000269" key="10">
    <source>
    </source>
</evidence>
<evidence type="ECO:0000269" key="11">
    <source>
    </source>
</evidence>
<evidence type="ECO:0000269" key="12">
    <source>
    </source>
</evidence>
<evidence type="ECO:0000269" key="13">
    <source>
    </source>
</evidence>
<evidence type="ECO:0000269" key="14">
    <source>
    </source>
</evidence>
<evidence type="ECO:0000269" key="15">
    <source>
    </source>
</evidence>
<evidence type="ECO:0000269" key="16">
    <source>
    </source>
</evidence>
<evidence type="ECO:0000269" key="17">
    <source>
    </source>
</evidence>
<evidence type="ECO:0000305" key="18"/>
<evidence type="ECO:0007829" key="19">
    <source>
        <dbReference type="PDB" id="1AWJ"/>
    </source>
</evidence>
<evidence type="ECO:0007829" key="20">
    <source>
        <dbReference type="PDB" id="1LUI"/>
    </source>
</evidence>
<evidence type="ECO:0007829" key="21">
    <source>
        <dbReference type="PDB" id="1LUK"/>
    </source>
</evidence>
<evidence type="ECO:0007829" key="22">
    <source>
        <dbReference type="PDB" id="1LUM"/>
    </source>
</evidence>
<evidence type="ECO:0007829" key="23">
    <source>
        <dbReference type="PDB" id="2ETZ"/>
    </source>
</evidence>
<evidence type="ECO:0007829" key="24">
    <source>
        <dbReference type="PDB" id="2K79"/>
    </source>
</evidence>
<evidence type="ECO:0007829" key="25">
    <source>
        <dbReference type="PDB" id="2RN8"/>
    </source>
</evidence>
<evidence type="ECO:0007829" key="26">
    <source>
        <dbReference type="PDB" id="3S9K"/>
    </source>
</evidence>
<keyword id="KW-0002">3D-structure</keyword>
<keyword id="KW-1064">Adaptive immunity</keyword>
<keyword id="KW-0067">ATP-binding</keyword>
<keyword id="KW-0963">Cytoplasm</keyword>
<keyword id="KW-0391">Immunity</keyword>
<keyword id="KW-0418">Kinase</keyword>
<keyword id="KW-0479">Metal-binding</keyword>
<keyword id="KW-0547">Nucleotide-binding</keyword>
<keyword id="KW-0539">Nucleus</keyword>
<keyword id="KW-0597">Phosphoprotein</keyword>
<keyword id="KW-1185">Reference proteome</keyword>
<keyword id="KW-0727">SH2 domain</keyword>
<keyword id="KW-0728">SH3 domain</keyword>
<keyword id="KW-0808">Transferase</keyword>
<keyword id="KW-0829">Tyrosine-protein kinase</keyword>
<keyword id="KW-0832">Ubl conjugation</keyword>
<keyword id="KW-0862">Zinc</keyword>
<keyword id="KW-0863">Zinc-finger</keyword>
<accession>Q03526</accession>
<sequence length="625" mass="72292">MNNFILLEEQLIKKSQQKRRTSPSNFKVRFFVLTKASLAYFEDRHGKKRTLKGSIELSRIKCVEIVKSDISIPCHYKYPFQTLVYLQVVHDNYLLYVFAPDCESRQRWVLTLKEETRNNNSLVSKYHPNFWMDGRWRCCSQLEKPAVGCAPYDPSKNASKKPLPPTPEDNRRSFQEPEETLVIALYDYQTNDPQELALRCDEEYYLLDSSEIHWWRVQDKNGHEGYAPSSYLVEKSPNNLETYEWYNKSISRDKAEKLLLDTGKEGAFMVRDSRTPGTYTVSVFTKAIISENPCIKHYHIKETNDSPKRYYVAEKYVFDSIPLLIQYHQYNGGGLVTRLRYPVCSWRQKAPVTAGLRYGKWVIQPSELTFVQEIGSGQFGLVHLGYWLNKDKVAIKTIQEGAMSEEDFIEEAEVMMKLSHPKLVQLYGVCLEQAPICLVFEFMEHGCLSDYLRSQRGLFAAETLLGMCLDVCEGMAYLEKACVIHRDLAARNCLVGENQVIKVSDFGMTRFVLDDQYTSSTGTKFPVKWASPEVFSFSRYSSKSDVWSFGVLMWEVFSEGKIPYENRSNSEVVEDISTGFRLYKPRLASCHVYQIMNHCWKEKPEDRPPFSQLLSQLAEIAEAGL</sequence>
<proteinExistence type="evidence at protein level"/>
<gene>
    <name type="primary">Itk</name>
    <name type="synonym">Emt</name>
    <name type="synonym">Tlk</name>
    <name type="synonym">Tsk</name>
</gene>
<comment type="function">
    <text evidence="11 15 16">Tyrosine kinase that plays an essential role in regulation of the adaptive immune response. Regulates the development, function and differentiation of conventional T-cells and nonconventional NKT-cells. When antigen presenting cells (APC) activate T-cell receptor (TCR), a series of phosphorylation lead to the recruitment of ITK to the cell membrane, in the vicinity of the stimulated TCR receptor, where it is phosphorylated by LCK. Phosphorylation leads to ITK autophosphorylation and full activation. Once activated, phosphorylates PLCG1, leading to the activation of this lipase and subsequent cleavage of its substrates. In turn, the endoplasmic reticulum releases calcium in the cytoplasm and the nuclear activator of activated T-cells (NFAT) translocates into the nucleus to perform its transcriptional duty. Phosphorylates 2 essential adapter proteins: the linker for activation of T-cells/LAT protein and LCP2. Then, a large number of signaling molecules such as VAV1 are recruited and ultimately lead to lymphokine production, T-cell proliferation and differentiation. Required for TCR-mediated calcium response in gamma-delta T-cells, may also be involved in the modulation of the transcriptomic signature in the Vgamma2-positive subset of immature gamma-delta T-cells (PubMed:23562159). Phosphorylates TBX21 at 'Tyr-525' and mediates its interaction with GATA3 (PubMed:15662016).</text>
</comment>
<comment type="catalytic activity">
    <reaction evidence="8">
        <text>L-tyrosyl-[protein] + ATP = O-phospho-L-tyrosyl-[protein] + ADP + H(+)</text>
        <dbReference type="Rhea" id="RHEA:10596"/>
        <dbReference type="Rhea" id="RHEA-COMP:10136"/>
        <dbReference type="Rhea" id="RHEA-COMP:20101"/>
        <dbReference type="ChEBI" id="CHEBI:15378"/>
        <dbReference type="ChEBI" id="CHEBI:30616"/>
        <dbReference type="ChEBI" id="CHEBI:46858"/>
        <dbReference type="ChEBI" id="CHEBI:61978"/>
        <dbReference type="ChEBI" id="CHEBI:456216"/>
        <dbReference type="EC" id="2.7.10.2"/>
    </reaction>
</comment>
<comment type="cofactor">
    <cofactor evidence="1">
        <name>Zn(2+)</name>
        <dbReference type="ChEBI" id="CHEBI:29105"/>
    </cofactor>
    <text evidence="1">Binds 1 zinc ion per subunit.</text>
</comment>
<comment type="subunit">
    <text evidence="2 11 13 14">Homooligomerizes; this association negatively regulates kinase activity. Interacts with PPIA/CYPA; this interaction regulates TCR signal strength via a proline-directed conformational switch in ITK. Interacts with THEMIS (By similarity). Interacts with FASLG. Interacts with VAV1; this interaction is important for VAV1 localization and TCR-induced actin polarization. Interacts with TBX21 (PubMed:15662016).</text>
</comment>
<comment type="interaction">
    <interactant intactId="EBI-647969">
        <id>Q03526</id>
    </interactant>
    <interactant intactId="EBI-8013886">
        <id>P08487</id>
        <label>PLCG1</label>
    </interactant>
    <organismsDiffer>true</organismsDiffer>
    <experiments>4</experiments>
</comment>
<comment type="subcellular location">
    <subcellularLocation>
        <location>Cytoplasm</location>
    </subcellularLocation>
    <subcellularLocation>
        <location evidence="11">Nucleus</location>
    </subcellularLocation>
    <text evidence="1">Localizes in the vicinity of cell surface receptors in the plasma membrane after receptor stimulation.</text>
</comment>
<comment type="tissue specificity">
    <text>Is detected in the thymus, lymph node and very faintly in the spleen, but is not detected in the liver, lung, kidney, heart, brain, intestine or testis. Expressed in T-lymphocytes and mast cells. It may also be expressed in natural killer cells.</text>
</comment>
<comment type="developmental stage">
    <text>Is present in the fetal thymus as early as day 14 of gestation. The levels are 5- to 10-fold higher in thymocytes than in peripheral T-cells, and increase in the thymus during development from neonate to adult.</text>
</comment>
<comment type="induction">
    <text>Through a myriad of surface receptors including the TCR/CD3 signaling complex, coreceptors, or chemokine receptors.</text>
</comment>
<comment type="domain">
    <text evidence="1">The N-terminal PH domain allows ITK to be recruited to the plasma membrane by an activated PI3 kinase. This domain also contains a proline-rich region (PRR). The adjoining domain is a SH3 domain, which binds to PRR (from itself or from other proteins). Next, a SH2 domain is required for binding tyrosine-phosphorylated substrates. In the C-terminal region, the kinase domain is required for tyrosine phosphorylation (By similarity).</text>
</comment>
<comment type="PTM">
    <text evidence="1">Phosphorylated at Tyr-517 in the activation loop of the kinase domain by LCK. Subsequent autophosphorylation at Tyr-186 leads to the kinase activation. The autophosphorylated Tyr-186 lies within the substrate binding sequence of the SH3 domain (By similarity).</text>
</comment>
<comment type="PTM">
    <text evidence="1">Ubiquitinated.</text>
</comment>
<comment type="disruption phenotype">
    <text evidence="10 12 15 16 17">Mice display decreased mature thymocytes and elicit profound defect in CD4+ and CD8+ T-cell development (PubMed:10213685, PubMed:16860760, PubMed:21036902, PubMed:8777721). Additionally, they show a strong decrease of cytokine production in response to TCR receptor stimulation (PubMed:21036902). Impaired TCR-mediated calcium response in gamma-delta T-cells (PubMed:23562159). Loss of Vgamma2-positive immature thymocyte-specific transcriptomic profile, although there is no change to overall transcription factor expression levels (PubMed:23562159). Not required for the generation of IL17A expressing gamma-delta T-cells (PubMed:23562159).</text>
</comment>
<comment type="similarity">
    <text evidence="4">Belongs to the protein kinase superfamily. Tyr protein kinase family. TEC subfamily.</text>
</comment>
<name>ITK_MOUSE</name>
<feature type="chain" id="PRO_0000088107" description="Tyrosine-protein kinase ITK/TSK">
    <location>
        <begin position="1"/>
        <end position="625"/>
    </location>
</feature>
<feature type="domain" description="PH" evidence="3">
    <location>
        <begin position="4"/>
        <end position="117"/>
    </location>
</feature>
<feature type="domain" description="SH3" evidence="6">
    <location>
        <begin position="177"/>
        <end position="237"/>
    </location>
</feature>
<feature type="domain" description="SH2" evidence="5">
    <location>
        <begin position="245"/>
        <end position="343"/>
    </location>
</feature>
<feature type="domain" description="Protein kinase" evidence="4">
    <location>
        <begin position="368"/>
        <end position="620"/>
    </location>
</feature>
<feature type="zinc finger region" description="Btk-type" evidence="7">
    <location>
        <begin position="119"/>
        <end position="155"/>
    </location>
</feature>
<feature type="region of interest" description="Disordered" evidence="9">
    <location>
        <begin position="153"/>
        <end position="174"/>
    </location>
</feature>
<feature type="active site" description="Proton acceptor" evidence="4 8">
    <location>
        <position position="487"/>
    </location>
</feature>
<feature type="binding site" evidence="7">
    <location>
        <position position="127"/>
    </location>
    <ligand>
        <name>Zn(2+)</name>
        <dbReference type="ChEBI" id="CHEBI:29105"/>
    </ligand>
</feature>
<feature type="binding site" evidence="7">
    <location>
        <position position="138"/>
    </location>
    <ligand>
        <name>Zn(2+)</name>
        <dbReference type="ChEBI" id="CHEBI:29105"/>
    </ligand>
</feature>
<feature type="binding site" evidence="7">
    <location>
        <position position="139"/>
    </location>
    <ligand>
        <name>Zn(2+)</name>
        <dbReference type="ChEBI" id="CHEBI:29105"/>
    </ligand>
</feature>
<feature type="binding site" evidence="7">
    <location>
        <position position="149"/>
    </location>
    <ligand>
        <name>Zn(2+)</name>
        <dbReference type="ChEBI" id="CHEBI:29105"/>
    </ligand>
</feature>
<feature type="binding site" evidence="4">
    <location>
        <begin position="374"/>
        <end position="382"/>
    </location>
    <ligand>
        <name>ATP</name>
        <dbReference type="ChEBI" id="CHEBI:30616"/>
    </ligand>
</feature>
<feature type="binding site" evidence="4">
    <location>
        <position position="396"/>
    </location>
    <ligand>
        <name>ATP</name>
        <dbReference type="ChEBI" id="CHEBI:30616"/>
    </ligand>
</feature>
<feature type="modified residue" description="Phosphotyrosine; by autocatalysis" evidence="2">
    <location>
        <position position="186"/>
    </location>
</feature>
<feature type="modified residue" description="Phosphotyrosine; by LCK" evidence="2">
    <location>
        <position position="517"/>
    </location>
</feature>
<feature type="modified residue" description="Phosphoserine" evidence="2">
    <location>
        <position position="570"/>
    </location>
</feature>
<feature type="sequence conflict" description="In Ref. 2, 3 and 4." evidence="18" ref="2 3 4">
    <location>
        <begin position="82"/>
        <end position="87"/>
    </location>
</feature>
<feature type="sequence conflict" description="In Ref. 3; L10628." evidence="18" ref="3">
    <original>F</original>
    <variation>S</variation>
    <location>
        <position position="535"/>
    </location>
</feature>
<feature type="sequence conflict" description="In Ref. 3; L10628." evidence="18" ref="3">
    <original>Y</original>
    <variation>C</variation>
    <location>
        <position position="540"/>
    </location>
</feature>
<feature type="strand" evidence="19">
    <location>
        <begin position="178"/>
        <end position="180"/>
    </location>
</feature>
<feature type="strand" evidence="24">
    <location>
        <begin position="181"/>
        <end position="186"/>
    </location>
</feature>
<feature type="strand" evidence="24">
    <location>
        <begin position="192"/>
        <end position="195"/>
    </location>
</feature>
<feature type="strand" evidence="19">
    <location>
        <begin position="200"/>
        <end position="202"/>
    </location>
</feature>
<feature type="strand" evidence="24">
    <location>
        <begin position="203"/>
        <end position="205"/>
    </location>
</feature>
<feature type="strand" evidence="19">
    <location>
        <begin position="211"/>
        <end position="214"/>
    </location>
</feature>
<feature type="strand" evidence="25">
    <location>
        <begin position="215"/>
        <end position="218"/>
    </location>
</feature>
<feature type="strand" evidence="19">
    <location>
        <begin position="220"/>
        <end position="222"/>
    </location>
</feature>
<feature type="strand" evidence="24">
    <location>
        <begin position="224"/>
        <end position="226"/>
    </location>
</feature>
<feature type="strand" evidence="24">
    <location>
        <begin position="229"/>
        <end position="234"/>
    </location>
</feature>
<feature type="helix" evidence="26">
    <location>
        <begin position="240"/>
        <end position="242"/>
    </location>
</feature>
<feature type="strand" evidence="23">
    <location>
        <begin position="243"/>
        <end position="246"/>
    </location>
</feature>
<feature type="strand" evidence="24">
    <location>
        <begin position="248"/>
        <end position="250"/>
    </location>
</feature>
<feature type="helix" evidence="26">
    <location>
        <begin position="252"/>
        <end position="262"/>
    </location>
</feature>
<feature type="strand" evidence="26">
    <location>
        <begin position="268"/>
        <end position="272"/>
    </location>
</feature>
<feature type="turn" evidence="20">
    <location>
        <begin position="275"/>
        <end position="277"/>
    </location>
</feature>
<feature type="strand" evidence="26">
    <location>
        <begin position="279"/>
        <end position="285"/>
    </location>
</feature>
<feature type="strand" evidence="26">
    <location>
        <begin position="290"/>
        <end position="292"/>
    </location>
</feature>
<feature type="strand" evidence="26">
    <location>
        <begin position="294"/>
        <end position="302"/>
    </location>
</feature>
<feature type="strand" evidence="22">
    <location>
        <begin position="305"/>
        <end position="307"/>
    </location>
</feature>
<feature type="strand" evidence="26">
    <location>
        <begin position="310"/>
        <end position="313"/>
    </location>
</feature>
<feature type="strand" evidence="20">
    <location>
        <begin position="318"/>
        <end position="320"/>
    </location>
</feature>
<feature type="helix" evidence="26">
    <location>
        <begin position="321"/>
        <end position="330"/>
    </location>
</feature>
<feature type="strand" evidence="26">
    <location>
        <begin position="335"/>
        <end position="337"/>
    </location>
</feature>
<feature type="strand" evidence="21">
    <location>
        <begin position="338"/>
        <end position="342"/>
    </location>
</feature>
<protein>
    <recommendedName>
        <fullName>Tyrosine-protein kinase ITK/TSK</fullName>
        <ecNumber>2.7.10.2</ecNumber>
    </recommendedName>
    <alternativeName>
        <fullName>IL-2-inducible T-cell kinase</fullName>
    </alternativeName>
    <alternativeName>
        <fullName>Kinase EMT</fullName>
    </alternativeName>
    <alternativeName>
        <fullName>Kinase TLK</fullName>
    </alternativeName>
    <alternativeName>
        <fullName>T-cell-specific kinase</fullName>
    </alternativeName>
</protein>